<accession>P19642</accession>
<accession>P77621</accession>
<feature type="chain" id="PRO_0000186657" description="PTS system maltose-specific EIICB component">
    <location>
        <begin position="1"/>
        <end position="530"/>
    </location>
</feature>
<feature type="transmembrane region" description="Helical" evidence="3">
    <location>
        <begin position="22"/>
        <end position="42"/>
    </location>
</feature>
<feature type="transmembrane region" description="Helical" evidence="3">
    <location>
        <begin position="69"/>
        <end position="89"/>
    </location>
</feature>
<feature type="transmembrane region" description="Helical" evidence="3">
    <location>
        <begin position="96"/>
        <end position="116"/>
    </location>
</feature>
<feature type="transmembrane region" description="Helical" evidence="3">
    <location>
        <begin position="138"/>
        <end position="158"/>
    </location>
</feature>
<feature type="transmembrane region" description="Helical" evidence="3">
    <location>
        <begin position="189"/>
        <end position="209"/>
    </location>
</feature>
<feature type="transmembrane region" description="Helical" evidence="3">
    <location>
        <begin position="289"/>
        <end position="309"/>
    </location>
</feature>
<feature type="transmembrane region" description="Helical" evidence="3">
    <location>
        <begin position="321"/>
        <end position="341"/>
    </location>
</feature>
<feature type="transmembrane region" description="Helical" evidence="3">
    <location>
        <begin position="343"/>
        <end position="363"/>
    </location>
</feature>
<feature type="transmembrane region" description="Helical" evidence="3">
    <location>
        <begin position="369"/>
        <end position="389"/>
    </location>
</feature>
<feature type="transmembrane region" description="Helical" evidence="3">
    <location>
        <begin position="399"/>
        <end position="419"/>
    </location>
</feature>
<feature type="domain" description="PTS EIIC type-1" evidence="3">
    <location>
        <begin position="1"/>
        <end position="431"/>
    </location>
</feature>
<feature type="domain" description="PTS EIIB type-1" evidence="2">
    <location>
        <begin position="449"/>
        <end position="530"/>
    </location>
</feature>
<feature type="active site" description="Phosphocysteine intermediate; for EIIB activity" evidence="2">
    <location>
        <position position="471"/>
    </location>
</feature>
<feature type="sequence conflict" description="In Ref. 5; AAA24103." evidence="7" ref="5">
    <original>GILPTTDAA</original>
    <variation>AFCQPRMPR</variation>
    <location>
        <begin position="120"/>
        <end position="128"/>
    </location>
</feature>
<feature type="sequence conflict" description="In Ref. 1; AAA24098." evidence="7" ref="1">
    <original>I</original>
    <variation>Y</variation>
    <location>
        <position position="144"/>
    </location>
</feature>
<feature type="sequence conflict" description="In Ref. 1; AAA24098." evidence="7" ref="1">
    <original>P</original>
    <variation>N</variation>
    <location>
        <position position="296"/>
    </location>
</feature>
<feature type="sequence conflict" description="In Ref. 1; AAA24098." evidence="7" ref="1">
    <original>E</original>
    <variation>R</variation>
    <location>
        <position position="432"/>
    </location>
</feature>
<dbReference type="EC" id="2.7.1.208" evidence="1"/>
<dbReference type="EMBL" id="M60722">
    <property type="protein sequence ID" value="AAA24098.1"/>
    <property type="molecule type" value="mRNA"/>
</dbReference>
<dbReference type="EMBL" id="U00096">
    <property type="protein sequence ID" value="AAC74693.1"/>
    <property type="molecule type" value="Genomic_DNA"/>
</dbReference>
<dbReference type="EMBL" id="AP009048">
    <property type="protein sequence ID" value="BAA15372.1"/>
    <property type="molecule type" value="Genomic_DNA"/>
</dbReference>
<dbReference type="EMBL" id="M28539">
    <property type="protein sequence ID" value="AAA24103.3"/>
    <property type="molecule type" value="Genomic_DNA"/>
</dbReference>
<dbReference type="PIR" id="G64918">
    <property type="entry name" value="G64918"/>
</dbReference>
<dbReference type="RefSeq" id="NP_416138.1">
    <property type="nucleotide sequence ID" value="NC_000913.3"/>
</dbReference>
<dbReference type="RefSeq" id="WP_000125583.1">
    <property type="nucleotide sequence ID" value="NZ_SSZK01000001.1"/>
</dbReference>
<dbReference type="SMR" id="P19642"/>
<dbReference type="BioGRID" id="4261128">
    <property type="interactions" value="34"/>
</dbReference>
<dbReference type="BioGRID" id="850370">
    <property type="interactions" value="1"/>
</dbReference>
<dbReference type="DIP" id="DIP-10150N"/>
<dbReference type="FunCoup" id="P19642">
    <property type="interactions" value="241"/>
</dbReference>
<dbReference type="IntAct" id="P19642">
    <property type="interactions" value="1"/>
</dbReference>
<dbReference type="STRING" id="511145.b1621"/>
<dbReference type="TCDB" id="4.A.1.1.3">
    <property type="family name" value="the pts glucose-glucoside (glc) family"/>
</dbReference>
<dbReference type="PaxDb" id="511145-b1621"/>
<dbReference type="EnsemblBacteria" id="AAC74693">
    <property type="protein sequence ID" value="AAC74693"/>
    <property type="gene ID" value="b1621"/>
</dbReference>
<dbReference type="GeneID" id="946009"/>
<dbReference type="KEGG" id="ecj:JW1613"/>
<dbReference type="KEGG" id="eco:b1621"/>
<dbReference type="KEGG" id="ecoc:C3026_09320"/>
<dbReference type="PATRIC" id="fig|1411691.4.peg.640"/>
<dbReference type="EchoBASE" id="EB0558"/>
<dbReference type="eggNOG" id="COG1263">
    <property type="taxonomic scope" value="Bacteria"/>
</dbReference>
<dbReference type="eggNOG" id="COG1264">
    <property type="taxonomic scope" value="Bacteria"/>
</dbReference>
<dbReference type="HOGENOM" id="CLU_012312_1_0_6"/>
<dbReference type="InParanoid" id="P19642"/>
<dbReference type="OMA" id="TATKWYL"/>
<dbReference type="OrthoDB" id="7571469at2"/>
<dbReference type="PhylomeDB" id="P19642"/>
<dbReference type="BioCyc" id="EcoCyc:MALX-MONOMER"/>
<dbReference type="BioCyc" id="MetaCyc:MALX-MONOMER"/>
<dbReference type="PHI-base" id="PHI:4631"/>
<dbReference type="PRO" id="PR:P19642"/>
<dbReference type="Proteomes" id="UP000000625">
    <property type="component" value="Chromosome"/>
</dbReference>
<dbReference type="GO" id="GO:0005886">
    <property type="term" value="C:plasma membrane"/>
    <property type="evidence" value="ECO:0000314"/>
    <property type="project" value="EcoCyc"/>
</dbReference>
<dbReference type="GO" id="GO:0055056">
    <property type="term" value="F:D-glucose transmembrane transporter activity"/>
    <property type="evidence" value="ECO:0000269"/>
    <property type="project" value="EcoCyc"/>
</dbReference>
<dbReference type="GO" id="GO:0016301">
    <property type="term" value="F:kinase activity"/>
    <property type="evidence" value="ECO:0007669"/>
    <property type="project" value="UniProtKB-KW"/>
</dbReference>
<dbReference type="GO" id="GO:0005363">
    <property type="term" value="F:maltose transmembrane transporter activity"/>
    <property type="evidence" value="ECO:0000269"/>
    <property type="project" value="EcoCyc"/>
</dbReference>
<dbReference type="GO" id="GO:0008982">
    <property type="term" value="F:protein-N(PI)-phosphohistidine-sugar phosphotransferase activity"/>
    <property type="evidence" value="ECO:0007669"/>
    <property type="project" value="InterPro"/>
</dbReference>
<dbReference type="GO" id="GO:0090564">
    <property type="term" value="F:protein-phosphocysteine-glucose phosphotransferase system transporter activity"/>
    <property type="evidence" value="ECO:0000318"/>
    <property type="project" value="GO_Central"/>
</dbReference>
<dbReference type="GO" id="GO:0009758">
    <property type="term" value="P:carbohydrate utilization"/>
    <property type="evidence" value="ECO:0000316"/>
    <property type="project" value="CACAO"/>
</dbReference>
<dbReference type="GO" id="GO:0046323">
    <property type="term" value="P:D-glucose import"/>
    <property type="evidence" value="ECO:0000269"/>
    <property type="project" value="EcoCyc"/>
</dbReference>
<dbReference type="GO" id="GO:1904659">
    <property type="term" value="P:D-glucose transmembrane transport"/>
    <property type="evidence" value="ECO:0000318"/>
    <property type="project" value="GO_Central"/>
</dbReference>
<dbReference type="GO" id="GO:0015768">
    <property type="term" value="P:maltose transport"/>
    <property type="evidence" value="ECO:0000269"/>
    <property type="project" value="EcoCyc"/>
</dbReference>
<dbReference type="GO" id="GO:0009401">
    <property type="term" value="P:phosphoenolpyruvate-dependent sugar phosphotransferase system"/>
    <property type="evidence" value="ECO:0000318"/>
    <property type="project" value="GO_Central"/>
</dbReference>
<dbReference type="CDD" id="cd00212">
    <property type="entry name" value="PTS_IIB_glc"/>
    <property type="match status" value="1"/>
</dbReference>
<dbReference type="FunFam" id="3.30.1360.60:FF:000001">
    <property type="entry name" value="PTS system glucose-specific IIBC component PtsG"/>
    <property type="match status" value="1"/>
</dbReference>
<dbReference type="Gene3D" id="3.30.1360.60">
    <property type="entry name" value="Glucose permease domain IIB"/>
    <property type="match status" value="1"/>
</dbReference>
<dbReference type="InterPro" id="IPR036878">
    <property type="entry name" value="Glu_permease_IIB"/>
</dbReference>
<dbReference type="InterPro" id="IPR018113">
    <property type="entry name" value="PTrfase_EIIB_Cys"/>
</dbReference>
<dbReference type="InterPro" id="IPR003352">
    <property type="entry name" value="PTS_EIIC"/>
</dbReference>
<dbReference type="InterPro" id="IPR013013">
    <property type="entry name" value="PTS_EIIC_1"/>
</dbReference>
<dbReference type="InterPro" id="IPR050429">
    <property type="entry name" value="PTS_Glucose_EIICBA"/>
</dbReference>
<dbReference type="InterPro" id="IPR001996">
    <property type="entry name" value="PTS_IIB_1"/>
</dbReference>
<dbReference type="InterPro" id="IPR011301">
    <property type="entry name" value="PTS_Mal/Glc-sp_IIBC_component"/>
</dbReference>
<dbReference type="InterPro" id="IPR004719">
    <property type="entry name" value="PTS_maltose/Glc_sub_IIC"/>
</dbReference>
<dbReference type="NCBIfam" id="TIGR00826">
    <property type="entry name" value="EIIB_glc"/>
    <property type="match status" value="1"/>
</dbReference>
<dbReference type="NCBIfam" id="NF007509">
    <property type="entry name" value="PRK10110.1"/>
    <property type="match status" value="1"/>
</dbReference>
<dbReference type="NCBIfam" id="TIGR00852">
    <property type="entry name" value="pts-Glc"/>
    <property type="match status" value="1"/>
</dbReference>
<dbReference type="NCBIfam" id="TIGR02004">
    <property type="entry name" value="PTS-IIBC-malX"/>
    <property type="match status" value="1"/>
</dbReference>
<dbReference type="PANTHER" id="PTHR30009">
    <property type="entry name" value="CYTOCHROME C-TYPE SYNTHESIS PROTEIN AND PTS TRANSMEMBRANE COMPONENT"/>
    <property type="match status" value="1"/>
</dbReference>
<dbReference type="PANTHER" id="PTHR30009:SF20">
    <property type="entry name" value="PTS SYSTEM GLUCOSE-SPECIFIC EIICB COMPONENT-RELATED"/>
    <property type="match status" value="1"/>
</dbReference>
<dbReference type="Pfam" id="PF00367">
    <property type="entry name" value="PTS_EIIB"/>
    <property type="match status" value="1"/>
</dbReference>
<dbReference type="Pfam" id="PF02378">
    <property type="entry name" value="PTS_EIIC"/>
    <property type="match status" value="1"/>
</dbReference>
<dbReference type="SUPFAM" id="SSF55604">
    <property type="entry name" value="Glucose permease domain IIB"/>
    <property type="match status" value="1"/>
</dbReference>
<dbReference type="PROSITE" id="PS51098">
    <property type="entry name" value="PTS_EIIB_TYPE_1"/>
    <property type="match status" value="1"/>
</dbReference>
<dbReference type="PROSITE" id="PS01035">
    <property type="entry name" value="PTS_EIIB_TYPE_1_CYS"/>
    <property type="match status" value="1"/>
</dbReference>
<dbReference type="PROSITE" id="PS51103">
    <property type="entry name" value="PTS_EIIC_TYPE_1"/>
    <property type="match status" value="1"/>
</dbReference>
<protein>
    <recommendedName>
        <fullName evidence="6">PTS system maltose-specific EIICB component</fullName>
    </recommendedName>
    <domain>
        <recommendedName>
            <fullName evidence="6">Maltose permease IIC component</fullName>
        </recommendedName>
        <alternativeName>
            <fullName evidence="6">PTS system maltose-specific EIIC component</fullName>
        </alternativeName>
    </domain>
    <domain>
        <recommendedName>
            <fullName evidence="6">Maltose-specific phosphotransferase enzyme IIB component</fullName>
            <ecNumber evidence="1">2.7.1.208</ecNumber>
        </recommendedName>
        <alternativeName>
            <fullName evidence="6">PTS system maltose-specific EIIB component</fullName>
        </alternativeName>
    </domain>
</protein>
<comment type="function">
    <text evidence="5">The phosphoenolpyruvate-dependent sugar phosphotransferase system (sugar PTS), a major carbohydrate active transport system, catalyzes the phosphorylation of incoming sugar substrates concomitantly with their translocation across the cell membrane. This system is involved in maltose transport. MalX can also recognize and transport glucose even though this sugar may not represent the natural substrate of the system.</text>
</comment>
<comment type="catalytic activity">
    <reaction evidence="1">
        <text>D-maltose(out) + N(pros)-phospho-L-histidyl-[protein] = alpha-maltose 6'-phosphate(in) + L-histidyl-[protein]</text>
        <dbReference type="Rhea" id="RHEA:49300"/>
        <dbReference type="Rhea" id="RHEA-COMP:9745"/>
        <dbReference type="Rhea" id="RHEA-COMP:9746"/>
        <dbReference type="ChEBI" id="CHEBI:17306"/>
        <dbReference type="ChEBI" id="CHEBI:29979"/>
        <dbReference type="ChEBI" id="CHEBI:57478"/>
        <dbReference type="ChEBI" id="CHEBI:64837"/>
        <dbReference type="EC" id="2.7.1.208"/>
    </reaction>
</comment>
<comment type="interaction">
    <interactant intactId="EBI-556578">
        <id>P19642</id>
    </interactant>
    <interactant intactId="EBI-368956">
        <id>P21599</id>
        <label>pykA</label>
    </interactant>
    <organismsDiffer>false</organismsDiffer>
    <experiments>4</experiments>
</comment>
<comment type="subcellular location">
    <subcellularLocation>
        <location evidence="3 4">Cell inner membrane</location>
        <topology evidence="3 4">Multi-pass membrane protein</topology>
    </subcellularLocation>
</comment>
<comment type="induction">
    <text evidence="5">By maltose. Repressed by MalI.</text>
</comment>
<comment type="domain">
    <text evidence="3">The EIIC domain type-1 forms the PTS system translocation channel and contains the specific substrate-binding site.</text>
</comment>
<comment type="domain">
    <text evidence="2">The PTS EIIB type-1 domain is phosphorylated by phospho-EIIA on a cysteinyl residue. Then, it transfers the phosphoryl group to the sugar substrate concomitantly with the sugar uptake processed by the PTS EIIC type-1 domain.</text>
</comment>
<keyword id="KW-0997">Cell inner membrane</keyword>
<keyword id="KW-1003">Cell membrane</keyword>
<keyword id="KW-0418">Kinase</keyword>
<keyword id="KW-0472">Membrane</keyword>
<keyword id="KW-0598">Phosphotransferase system</keyword>
<keyword id="KW-1185">Reference proteome</keyword>
<keyword id="KW-0762">Sugar transport</keyword>
<keyword id="KW-0808">Transferase</keyword>
<keyword id="KW-0812">Transmembrane</keyword>
<keyword id="KW-1133">Transmembrane helix</keyword>
<keyword id="KW-0813">Transport</keyword>
<gene>
    <name evidence="6" type="primary">malX</name>
    <name type="ordered locus">b1621</name>
    <name type="ordered locus">JW1613</name>
</gene>
<sequence length="530" mass="56627">MTAKTAPKVTLWEFFQQLGKTFMLPVALLSFCGIMLGIGSSLSSHDVITLIPVLGNPVLQAIFTWMSKIGSFAFSFLPVMFCIAIPLGLARENKGVAAFAGFIGYAVMNLAVNFWLTNKGILPTTDAAVLKANNIQSILGIQSIDTGILGAVIAGIIVWMLHERFHNIRLPDALAFFGGTRFVPIISSLVMGLVGLVIPLVWPIFAMGISGLGHMINSAGDFGPMLFGTGERLLLPFGLHHILVALIRFTDAGGTQEVCGQTVSGALTIFQAQLSCPTTHGFSESATRFLSQGKMPAFLGGLPGAALAMYHCARPENRHKIKGLLISGLIACVVGGTTEPLEFLFLFVAPVLYVIHALLTGLGFTVMSVLGVTIGNTDGNIIDFVVFGILHGLSTKWYMVPVVAAIWFVVYYVIFRFAITRFNLKTPGRDSEVASSIEKAVAGAPGKSGYNVPAILEALGGADNIVSLDNCITRLRLSVKDMSLVNVQALKDNRAIGVVQLNQHNLQVVIGPQVQSVKDEMAGLMHTVQA</sequence>
<name>PTOCB_ECOLI</name>
<reference key="1">
    <citation type="journal article" date="1991" name="J. Bacteriol.">
        <title>The malX malY operon of Escherichia coli encodes a novel enzyme II of the phosphotransferase system recognizing glucose and maltose and an enzyme abolishing the endogenous induction of the maltose system.</title>
        <authorList>
            <person name="Reidl J."/>
            <person name="Boos W."/>
        </authorList>
    </citation>
    <scope>NUCLEOTIDE SEQUENCE [GENOMIC DNA]</scope>
    <scope>FUNCTION</scope>
    <scope>SUBSTRATE SPECIFICITY</scope>
    <scope>INDUCTION</scope>
    <source>
        <strain>K12</strain>
    </source>
</reference>
<reference key="2">
    <citation type="journal article" date="1996" name="DNA Res.">
        <title>A 570-kb DNA sequence of the Escherichia coli K-12 genome corresponding to the 28.0-40.1 min region on the linkage map.</title>
        <authorList>
            <person name="Aiba H."/>
            <person name="Baba T."/>
            <person name="Fujita K."/>
            <person name="Hayashi K."/>
            <person name="Inada T."/>
            <person name="Isono K."/>
            <person name="Itoh T."/>
            <person name="Kasai H."/>
            <person name="Kashimoto K."/>
            <person name="Kimura S."/>
            <person name="Kitakawa M."/>
            <person name="Kitagawa M."/>
            <person name="Makino K."/>
            <person name="Miki T."/>
            <person name="Mizobuchi K."/>
            <person name="Mori H."/>
            <person name="Mori T."/>
            <person name="Motomura K."/>
            <person name="Nakade S."/>
            <person name="Nakamura Y."/>
            <person name="Nashimoto H."/>
            <person name="Nishio Y."/>
            <person name="Oshima T."/>
            <person name="Saito N."/>
            <person name="Sampei G."/>
            <person name="Seki Y."/>
            <person name="Sivasundaram S."/>
            <person name="Tagami H."/>
            <person name="Takeda J."/>
            <person name="Takemoto K."/>
            <person name="Takeuchi Y."/>
            <person name="Wada C."/>
            <person name="Yamamoto Y."/>
            <person name="Horiuchi T."/>
        </authorList>
    </citation>
    <scope>NUCLEOTIDE SEQUENCE [LARGE SCALE GENOMIC DNA]</scope>
    <source>
        <strain>K12 / W3110 / ATCC 27325 / DSM 5911</strain>
    </source>
</reference>
<reference key="3">
    <citation type="journal article" date="1997" name="Science">
        <title>The complete genome sequence of Escherichia coli K-12.</title>
        <authorList>
            <person name="Blattner F.R."/>
            <person name="Plunkett G. III"/>
            <person name="Bloch C.A."/>
            <person name="Perna N.T."/>
            <person name="Burland V."/>
            <person name="Riley M."/>
            <person name="Collado-Vides J."/>
            <person name="Glasner J.D."/>
            <person name="Rode C.K."/>
            <person name="Mayhew G.F."/>
            <person name="Gregor J."/>
            <person name="Davis N.W."/>
            <person name="Kirkpatrick H.A."/>
            <person name="Goeden M.A."/>
            <person name="Rose D.J."/>
            <person name="Mau B."/>
            <person name="Shao Y."/>
        </authorList>
    </citation>
    <scope>NUCLEOTIDE SEQUENCE [LARGE SCALE GENOMIC DNA]</scope>
    <source>
        <strain>K12 / MG1655 / ATCC 47076</strain>
    </source>
</reference>
<reference key="4">
    <citation type="journal article" date="2006" name="Mol. Syst. Biol.">
        <title>Highly accurate genome sequences of Escherichia coli K-12 strains MG1655 and W3110.</title>
        <authorList>
            <person name="Hayashi K."/>
            <person name="Morooka N."/>
            <person name="Yamamoto Y."/>
            <person name="Fujita K."/>
            <person name="Isono K."/>
            <person name="Choi S."/>
            <person name="Ohtsubo E."/>
            <person name="Baba T."/>
            <person name="Wanner B.L."/>
            <person name="Mori H."/>
            <person name="Horiuchi T."/>
        </authorList>
    </citation>
    <scope>NUCLEOTIDE SEQUENCE [LARGE SCALE GENOMIC DNA]</scope>
    <source>
        <strain>K12 / W3110 / ATCC 27325 / DSM 5911</strain>
    </source>
</reference>
<reference key="5">
    <citation type="journal article" date="1989" name="J. Bacteriol.">
        <title>MalI, a novel protein involved in regulation of the maltose system of Escherichia coli, is highly homologous to the repressor proteins GalR, CytR, and LacI.</title>
        <authorList>
            <person name="Reidl J."/>
            <person name="Roemisch K."/>
            <person name="Ehrmann M."/>
            <person name="Boos W."/>
        </authorList>
    </citation>
    <scope>PRELIMINARY NUCLEOTIDE SEQUENCE [GENOMIC DNA] OF 1-128</scope>
</reference>
<reference key="6">
    <citation type="journal article" date="2005" name="Science">
        <title>Global topology analysis of the Escherichia coli inner membrane proteome.</title>
        <authorList>
            <person name="Daley D.O."/>
            <person name="Rapp M."/>
            <person name="Granseth E."/>
            <person name="Melen K."/>
            <person name="Drew D."/>
            <person name="von Heijne G."/>
        </authorList>
    </citation>
    <scope>SUBCELLULAR LOCATION</scope>
    <source>
        <strain>K12 / MG1655 / ATCC 47076</strain>
    </source>
</reference>
<proteinExistence type="evidence at protein level"/>
<evidence type="ECO:0000250" key="1">
    <source>
        <dbReference type="UniProtKB" id="P54715"/>
    </source>
</evidence>
<evidence type="ECO:0000255" key="2">
    <source>
        <dbReference type="PROSITE-ProRule" id="PRU00421"/>
    </source>
</evidence>
<evidence type="ECO:0000255" key="3">
    <source>
        <dbReference type="PROSITE-ProRule" id="PRU00426"/>
    </source>
</evidence>
<evidence type="ECO:0000269" key="4">
    <source>
    </source>
</evidence>
<evidence type="ECO:0000269" key="5">
    <source>
    </source>
</evidence>
<evidence type="ECO:0000303" key="6">
    <source>
    </source>
</evidence>
<evidence type="ECO:0000305" key="7"/>
<organism>
    <name type="scientific">Escherichia coli (strain K12)</name>
    <dbReference type="NCBI Taxonomy" id="83333"/>
    <lineage>
        <taxon>Bacteria</taxon>
        <taxon>Pseudomonadati</taxon>
        <taxon>Pseudomonadota</taxon>
        <taxon>Gammaproteobacteria</taxon>
        <taxon>Enterobacterales</taxon>
        <taxon>Enterobacteriaceae</taxon>
        <taxon>Escherichia</taxon>
    </lineage>
</organism>